<dbReference type="EC" id="4.6.1.12" evidence="1"/>
<dbReference type="EMBL" id="AP009049">
    <property type="protein sequence ID" value="BAH08387.1"/>
    <property type="molecule type" value="Genomic_DNA"/>
</dbReference>
<dbReference type="RefSeq" id="WP_012104093.1">
    <property type="nucleotide sequence ID" value="NC_011837.1"/>
</dbReference>
<dbReference type="SMR" id="B9DXE4"/>
<dbReference type="KEGG" id="ckr:CKR_3336"/>
<dbReference type="HOGENOM" id="CLU_084630_2_0_9"/>
<dbReference type="UniPathway" id="UPA00056">
    <property type="reaction ID" value="UER00095"/>
</dbReference>
<dbReference type="Proteomes" id="UP000007969">
    <property type="component" value="Chromosome"/>
</dbReference>
<dbReference type="GO" id="GO:0008685">
    <property type="term" value="F:2-C-methyl-D-erythritol 2,4-cyclodiphosphate synthase activity"/>
    <property type="evidence" value="ECO:0007669"/>
    <property type="project" value="UniProtKB-UniRule"/>
</dbReference>
<dbReference type="GO" id="GO:0046872">
    <property type="term" value="F:metal ion binding"/>
    <property type="evidence" value="ECO:0007669"/>
    <property type="project" value="UniProtKB-KW"/>
</dbReference>
<dbReference type="GO" id="GO:0019288">
    <property type="term" value="P:isopentenyl diphosphate biosynthetic process, methylerythritol 4-phosphate pathway"/>
    <property type="evidence" value="ECO:0007669"/>
    <property type="project" value="UniProtKB-UniRule"/>
</dbReference>
<dbReference type="GO" id="GO:0016114">
    <property type="term" value="P:terpenoid biosynthetic process"/>
    <property type="evidence" value="ECO:0007669"/>
    <property type="project" value="InterPro"/>
</dbReference>
<dbReference type="CDD" id="cd00554">
    <property type="entry name" value="MECDP_synthase"/>
    <property type="match status" value="1"/>
</dbReference>
<dbReference type="FunFam" id="3.30.1330.50:FF:000001">
    <property type="entry name" value="2-C-methyl-D-erythritol 2,4-cyclodiphosphate synthase"/>
    <property type="match status" value="1"/>
</dbReference>
<dbReference type="Gene3D" id="3.30.1330.50">
    <property type="entry name" value="2-C-methyl-D-erythritol 2,4-cyclodiphosphate synthase"/>
    <property type="match status" value="1"/>
</dbReference>
<dbReference type="HAMAP" id="MF_00107">
    <property type="entry name" value="IspF"/>
    <property type="match status" value="1"/>
</dbReference>
<dbReference type="InterPro" id="IPR003526">
    <property type="entry name" value="MECDP_synthase"/>
</dbReference>
<dbReference type="InterPro" id="IPR020555">
    <property type="entry name" value="MECDP_synthase_CS"/>
</dbReference>
<dbReference type="InterPro" id="IPR036571">
    <property type="entry name" value="MECDP_synthase_sf"/>
</dbReference>
<dbReference type="NCBIfam" id="TIGR00151">
    <property type="entry name" value="ispF"/>
    <property type="match status" value="1"/>
</dbReference>
<dbReference type="PANTHER" id="PTHR43181">
    <property type="entry name" value="2-C-METHYL-D-ERYTHRITOL 2,4-CYCLODIPHOSPHATE SYNTHASE, CHLOROPLASTIC"/>
    <property type="match status" value="1"/>
</dbReference>
<dbReference type="PANTHER" id="PTHR43181:SF1">
    <property type="entry name" value="2-C-METHYL-D-ERYTHRITOL 2,4-CYCLODIPHOSPHATE SYNTHASE, CHLOROPLASTIC"/>
    <property type="match status" value="1"/>
</dbReference>
<dbReference type="Pfam" id="PF02542">
    <property type="entry name" value="YgbB"/>
    <property type="match status" value="1"/>
</dbReference>
<dbReference type="SUPFAM" id="SSF69765">
    <property type="entry name" value="IpsF-like"/>
    <property type="match status" value="1"/>
</dbReference>
<dbReference type="PROSITE" id="PS01350">
    <property type="entry name" value="ISPF"/>
    <property type="match status" value="1"/>
</dbReference>
<reference key="1">
    <citation type="submission" date="2005-09" db="EMBL/GenBank/DDBJ databases">
        <title>Complete genome sequence of Clostridium kluyveri and comparative genomics of Clostridia species.</title>
        <authorList>
            <person name="Inui M."/>
            <person name="Nonaka H."/>
            <person name="Shinoda Y."/>
            <person name="Ikenaga Y."/>
            <person name="Abe M."/>
            <person name="Naito K."/>
            <person name="Vertes A.A."/>
            <person name="Yukawa H."/>
        </authorList>
    </citation>
    <scope>NUCLEOTIDE SEQUENCE [LARGE SCALE GENOMIC DNA]</scope>
    <source>
        <strain>NBRC 12016</strain>
    </source>
</reference>
<keyword id="KW-0414">Isoprene biosynthesis</keyword>
<keyword id="KW-0456">Lyase</keyword>
<keyword id="KW-0479">Metal-binding</keyword>
<gene>
    <name evidence="1" type="primary">ispF</name>
    <name type="ordered locus">CKR_3336</name>
</gene>
<protein>
    <recommendedName>
        <fullName evidence="1">2-C-methyl-D-erythritol 2,4-cyclodiphosphate synthase</fullName>
        <shortName evidence="1">MECDP-synthase</shortName>
        <shortName evidence="1">MECPP-synthase</shortName>
        <shortName evidence="1">MECPS</shortName>
        <ecNumber evidence="1">4.6.1.12</ecNumber>
    </recommendedName>
</protein>
<comment type="function">
    <text evidence="1">Involved in the biosynthesis of isopentenyl diphosphate (IPP) and dimethylallyl diphosphate (DMAPP), two major building blocks of isoprenoid compounds. Catalyzes the conversion of 4-diphosphocytidyl-2-C-methyl-D-erythritol 2-phosphate (CDP-ME2P) to 2-C-methyl-D-erythritol 2,4-cyclodiphosphate (ME-CPP) with a corresponding release of cytidine 5-monophosphate (CMP).</text>
</comment>
<comment type="catalytic activity">
    <reaction evidence="1">
        <text>4-CDP-2-C-methyl-D-erythritol 2-phosphate = 2-C-methyl-D-erythritol 2,4-cyclic diphosphate + CMP</text>
        <dbReference type="Rhea" id="RHEA:23864"/>
        <dbReference type="ChEBI" id="CHEBI:57919"/>
        <dbReference type="ChEBI" id="CHEBI:58483"/>
        <dbReference type="ChEBI" id="CHEBI:60377"/>
        <dbReference type="EC" id="4.6.1.12"/>
    </reaction>
</comment>
<comment type="cofactor">
    <cofactor evidence="1">
        <name>a divalent metal cation</name>
        <dbReference type="ChEBI" id="CHEBI:60240"/>
    </cofactor>
    <text evidence="1">Binds 1 divalent metal cation per subunit.</text>
</comment>
<comment type="pathway">
    <text evidence="1">Isoprenoid biosynthesis; isopentenyl diphosphate biosynthesis via DXP pathway; isopentenyl diphosphate from 1-deoxy-D-xylulose 5-phosphate: step 4/6.</text>
</comment>
<comment type="subunit">
    <text evidence="1">Homotrimer.</text>
</comment>
<comment type="similarity">
    <text evidence="1">Belongs to the IspF family.</text>
</comment>
<name>ISPF_CLOK1</name>
<accession>B9DXE4</accession>
<organism>
    <name type="scientific">Clostridium kluyveri (strain NBRC 12016)</name>
    <dbReference type="NCBI Taxonomy" id="583346"/>
    <lineage>
        <taxon>Bacteria</taxon>
        <taxon>Bacillati</taxon>
        <taxon>Bacillota</taxon>
        <taxon>Clostridia</taxon>
        <taxon>Eubacteriales</taxon>
        <taxon>Clostridiaceae</taxon>
        <taxon>Clostridium</taxon>
    </lineage>
</organism>
<feature type="chain" id="PRO_1000119000" description="2-C-methyl-D-erythritol 2,4-cyclodiphosphate synthase">
    <location>
        <begin position="1"/>
        <end position="164"/>
    </location>
</feature>
<feature type="binding site" evidence="1">
    <location>
        <begin position="8"/>
        <end position="10"/>
    </location>
    <ligand>
        <name>4-CDP-2-C-methyl-D-erythritol 2-phosphate</name>
        <dbReference type="ChEBI" id="CHEBI:57919"/>
    </ligand>
</feature>
<feature type="binding site" evidence="1">
    <location>
        <position position="8"/>
    </location>
    <ligand>
        <name>a divalent metal cation</name>
        <dbReference type="ChEBI" id="CHEBI:60240"/>
    </ligand>
</feature>
<feature type="binding site" evidence="1">
    <location>
        <position position="10"/>
    </location>
    <ligand>
        <name>a divalent metal cation</name>
        <dbReference type="ChEBI" id="CHEBI:60240"/>
    </ligand>
</feature>
<feature type="binding site" evidence="1">
    <location>
        <begin position="34"/>
        <end position="35"/>
    </location>
    <ligand>
        <name>4-CDP-2-C-methyl-D-erythritol 2-phosphate</name>
        <dbReference type="ChEBI" id="CHEBI:57919"/>
    </ligand>
</feature>
<feature type="binding site" evidence="1">
    <location>
        <position position="42"/>
    </location>
    <ligand>
        <name>a divalent metal cation</name>
        <dbReference type="ChEBI" id="CHEBI:60240"/>
    </ligand>
</feature>
<feature type="binding site" evidence="1">
    <location>
        <begin position="56"/>
        <end position="58"/>
    </location>
    <ligand>
        <name>4-CDP-2-C-methyl-D-erythritol 2-phosphate</name>
        <dbReference type="ChEBI" id="CHEBI:57919"/>
    </ligand>
</feature>
<feature type="binding site" evidence="1">
    <location>
        <begin position="132"/>
        <end position="135"/>
    </location>
    <ligand>
        <name>4-CDP-2-C-methyl-D-erythritol 2-phosphate</name>
        <dbReference type="ChEBI" id="CHEBI:57919"/>
    </ligand>
</feature>
<feature type="binding site" evidence="1">
    <location>
        <position position="139"/>
    </location>
    <ligand>
        <name>4-CDP-2-C-methyl-D-erythritol 2-phosphate</name>
        <dbReference type="ChEBI" id="CHEBI:57919"/>
    </ligand>
</feature>
<feature type="binding site" evidence="1">
    <location>
        <position position="142"/>
    </location>
    <ligand>
        <name>4-CDP-2-C-methyl-D-erythritol 2-phosphate</name>
        <dbReference type="ChEBI" id="CHEBI:57919"/>
    </ligand>
</feature>
<feature type="site" description="Transition state stabilizer" evidence="1">
    <location>
        <position position="34"/>
    </location>
</feature>
<feature type="site" description="Transition state stabilizer" evidence="1">
    <location>
        <position position="133"/>
    </location>
</feature>
<evidence type="ECO:0000255" key="1">
    <source>
        <dbReference type="HAMAP-Rule" id="MF_00107"/>
    </source>
</evidence>
<sequence>MRVGLGYDVHKLGYNTPLILGGVNIPFNKGLIGHSDADVLVHAIMDALLGALSLGDIGKHFPPSDMKYKNISSLKLLNYVSNLIKSKGYSIGNIDSTIIAEEPKLFPYIPDMRLNIAKILKVNTSIISVKATTEEGLGFTGKKEGIAAQSICLLYNNLKHSIDL</sequence>
<proteinExistence type="inferred from homology"/>